<comment type="subunit">
    <text evidence="1">Part of the 50S ribosomal subunit.</text>
</comment>
<comment type="subcellular location">
    <subcellularLocation>
        <location>Plastid</location>
        <location>Chloroplast</location>
    </subcellularLocation>
</comment>
<comment type="similarity">
    <text evidence="4">Belongs to the universal ribosomal protein uL2 family.</text>
</comment>
<keyword id="KW-0150">Chloroplast</keyword>
<keyword id="KW-0934">Plastid</keyword>
<keyword id="KW-0687">Ribonucleoprotein</keyword>
<keyword id="KW-0689">Ribosomal protein</keyword>
<gene>
    <name type="primary">rpl2-A</name>
</gene>
<gene>
    <name type="primary">rpl2-B</name>
</gene>
<reference key="1">
    <citation type="journal article" date="2006" name="BMC Plant Biol.">
        <title>Rapid and accurate pyrosequencing of angiosperm plastid genomes.</title>
        <authorList>
            <person name="Moore M.J."/>
            <person name="Dhingra A."/>
            <person name="Soltis P.S."/>
            <person name="Shaw R."/>
            <person name="Farmerie W.G."/>
            <person name="Folta K.M."/>
            <person name="Soltis D.E."/>
        </authorList>
    </citation>
    <scope>NUCLEOTIDE SEQUENCE [LARGE SCALE GENOMIC DNA]</scope>
</reference>
<proteinExistence type="inferred from homology"/>
<accession>Q09FP6</accession>
<sequence>MAIHLYKTSTPSTRNGTVGSQVKSNPRNNLIYGQRRCGKGRNARGIITARHRGGGHKRLYRKIDFRRNEKDISGRIVTIEYDPNRNAYICLIHYGDGEKRYILHPRGAIIGDTIVSGTEVPISMGNALPLTDMPLGTAIHNIEITLGKGGQLARAAGAVAKLIAKEGKSATLKLPSGEVRLISKNCSATVGQVGNVGVNQKSLGRAGSKRWLGKRPVVRGVVMNPVDHPHGGGEGRAPIGRKKPTTPWGYPALGRRSRKRNKYSDSLILRRRSK</sequence>
<dbReference type="EMBL" id="DQ923117">
    <property type="protein sequence ID" value="ABI49906.1"/>
    <property type="molecule type" value="Genomic_DNA"/>
</dbReference>
<dbReference type="EMBL" id="DQ923117">
    <property type="protein sequence ID" value="ABI49929.1"/>
    <property type="molecule type" value="Genomic_DNA"/>
</dbReference>
<dbReference type="SMR" id="Q09FP6"/>
<dbReference type="GO" id="GO:0009507">
    <property type="term" value="C:chloroplast"/>
    <property type="evidence" value="ECO:0007669"/>
    <property type="project" value="UniProtKB-SubCell"/>
</dbReference>
<dbReference type="GO" id="GO:0005762">
    <property type="term" value="C:mitochondrial large ribosomal subunit"/>
    <property type="evidence" value="ECO:0007669"/>
    <property type="project" value="TreeGrafter"/>
</dbReference>
<dbReference type="GO" id="GO:0019843">
    <property type="term" value="F:rRNA binding"/>
    <property type="evidence" value="ECO:0007669"/>
    <property type="project" value="UniProtKB-UniRule"/>
</dbReference>
<dbReference type="GO" id="GO:0003735">
    <property type="term" value="F:structural constituent of ribosome"/>
    <property type="evidence" value="ECO:0007669"/>
    <property type="project" value="InterPro"/>
</dbReference>
<dbReference type="GO" id="GO:0016740">
    <property type="term" value="F:transferase activity"/>
    <property type="evidence" value="ECO:0007669"/>
    <property type="project" value="InterPro"/>
</dbReference>
<dbReference type="GO" id="GO:0032543">
    <property type="term" value="P:mitochondrial translation"/>
    <property type="evidence" value="ECO:0007669"/>
    <property type="project" value="TreeGrafter"/>
</dbReference>
<dbReference type="FunFam" id="4.10.950.10:FF:000001">
    <property type="entry name" value="50S ribosomal protein L2"/>
    <property type="match status" value="1"/>
</dbReference>
<dbReference type="FunFam" id="2.30.30.30:FF:000008">
    <property type="entry name" value="50S ribosomal protein L2, chloroplastic"/>
    <property type="match status" value="1"/>
</dbReference>
<dbReference type="FunFam" id="2.40.50.140:FF:000029">
    <property type="entry name" value="50S ribosomal protein L2, chloroplastic"/>
    <property type="match status" value="1"/>
</dbReference>
<dbReference type="Gene3D" id="2.30.30.30">
    <property type="match status" value="1"/>
</dbReference>
<dbReference type="Gene3D" id="2.40.50.140">
    <property type="entry name" value="Nucleic acid-binding proteins"/>
    <property type="match status" value="1"/>
</dbReference>
<dbReference type="Gene3D" id="4.10.950.10">
    <property type="entry name" value="Ribosomal protein L2, domain 3"/>
    <property type="match status" value="1"/>
</dbReference>
<dbReference type="HAMAP" id="MF_01320_B">
    <property type="entry name" value="Ribosomal_uL2_B"/>
    <property type="match status" value="1"/>
</dbReference>
<dbReference type="InterPro" id="IPR012340">
    <property type="entry name" value="NA-bd_OB-fold"/>
</dbReference>
<dbReference type="InterPro" id="IPR014722">
    <property type="entry name" value="Rib_uL2_dom2"/>
</dbReference>
<dbReference type="InterPro" id="IPR002171">
    <property type="entry name" value="Ribosomal_uL2"/>
</dbReference>
<dbReference type="InterPro" id="IPR005880">
    <property type="entry name" value="Ribosomal_uL2_bac/org-type"/>
</dbReference>
<dbReference type="InterPro" id="IPR022669">
    <property type="entry name" value="Ribosomal_uL2_C"/>
</dbReference>
<dbReference type="InterPro" id="IPR022671">
    <property type="entry name" value="Ribosomal_uL2_CS"/>
</dbReference>
<dbReference type="InterPro" id="IPR014726">
    <property type="entry name" value="Ribosomal_uL2_dom3"/>
</dbReference>
<dbReference type="InterPro" id="IPR022666">
    <property type="entry name" value="Ribosomal_uL2_RNA-bd_dom"/>
</dbReference>
<dbReference type="InterPro" id="IPR008991">
    <property type="entry name" value="Translation_prot_SH3-like_sf"/>
</dbReference>
<dbReference type="NCBIfam" id="TIGR01171">
    <property type="entry name" value="rplB_bact"/>
    <property type="match status" value="1"/>
</dbReference>
<dbReference type="PANTHER" id="PTHR13691:SF5">
    <property type="entry name" value="LARGE RIBOSOMAL SUBUNIT PROTEIN UL2M"/>
    <property type="match status" value="1"/>
</dbReference>
<dbReference type="PANTHER" id="PTHR13691">
    <property type="entry name" value="RIBOSOMAL PROTEIN L2"/>
    <property type="match status" value="1"/>
</dbReference>
<dbReference type="Pfam" id="PF00181">
    <property type="entry name" value="Ribosomal_L2"/>
    <property type="match status" value="1"/>
</dbReference>
<dbReference type="Pfam" id="PF03947">
    <property type="entry name" value="Ribosomal_L2_C"/>
    <property type="match status" value="1"/>
</dbReference>
<dbReference type="PIRSF" id="PIRSF002158">
    <property type="entry name" value="Ribosomal_L2"/>
    <property type="match status" value="1"/>
</dbReference>
<dbReference type="SMART" id="SM01383">
    <property type="entry name" value="Ribosomal_L2"/>
    <property type="match status" value="1"/>
</dbReference>
<dbReference type="SMART" id="SM01382">
    <property type="entry name" value="Ribosomal_L2_C"/>
    <property type="match status" value="1"/>
</dbReference>
<dbReference type="SUPFAM" id="SSF50249">
    <property type="entry name" value="Nucleic acid-binding proteins"/>
    <property type="match status" value="1"/>
</dbReference>
<dbReference type="SUPFAM" id="SSF50104">
    <property type="entry name" value="Translation proteins SH3-like domain"/>
    <property type="match status" value="1"/>
</dbReference>
<dbReference type="PROSITE" id="PS00467">
    <property type="entry name" value="RIBOSOMAL_L2"/>
    <property type="match status" value="1"/>
</dbReference>
<protein>
    <recommendedName>
        <fullName evidence="2">Large ribosomal subunit protein uL2cz/uL2cy</fullName>
    </recommendedName>
    <alternativeName>
        <fullName evidence="4">50S ribosomal protein L2, chloroplastic</fullName>
    </alternativeName>
</protein>
<name>RK2_NANDO</name>
<feature type="chain" id="PRO_0000310081" description="Large ribosomal subunit protein uL2cz/uL2cy">
    <location>
        <begin position="1"/>
        <end position="274"/>
    </location>
</feature>
<feature type="region of interest" description="Disordered" evidence="3">
    <location>
        <begin position="1"/>
        <end position="23"/>
    </location>
</feature>
<feature type="region of interest" description="Disordered" evidence="3">
    <location>
        <begin position="223"/>
        <end position="274"/>
    </location>
</feature>
<feature type="compositionally biased region" description="Polar residues" evidence="3">
    <location>
        <begin position="7"/>
        <end position="23"/>
    </location>
</feature>
<organism>
    <name type="scientific">Nandina domestica</name>
    <name type="common">Heavenly bamboo</name>
    <dbReference type="NCBI Taxonomy" id="41776"/>
    <lineage>
        <taxon>Eukaryota</taxon>
        <taxon>Viridiplantae</taxon>
        <taxon>Streptophyta</taxon>
        <taxon>Embryophyta</taxon>
        <taxon>Tracheophyta</taxon>
        <taxon>Spermatophyta</taxon>
        <taxon>Magnoliopsida</taxon>
        <taxon>Ranunculales</taxon>
        <taxon>Berberidaceae</taxon>
        <taxon>Nandinoideae</taxon>
        <taxon>Nandineae</taxon>
        <taxon>Nandina</taxon>
    </lineage>
</organism>
<evidence type="ECO:0000250" key="1"/>
<evidence type="ECO:0000255" key="2">
    <source>
        <dbReference type="HAMAP-Rule" id="MF_01320"/>
    </source>
</evidence>
<evidence type="ECO:0000256" key="3">
    <source>
        <dbReference type="SAM" id="MobiDB-lite"/>
    </source>
</evidence>
<evidence type="ECO:0000305" key="4"/>
<geneLocation type="chloroplast"/>